<protein>
    <recommendedName>
        <fullName>Brevinin-1Bc</fullName>
    </recommendedName>
</protein>
<sequence length="24" mass="2613">FLPFIAGVAAKFLPKIFCAISKKC</sequence>
<dbReference type="GO" id="GO:0005576">
    <property type="term" value="C:extracellular region"/>
    <property type="evidence" value="ECO:0007669"/>
    <property type="project" value="UniProtKB-SubCell"/>
</dbReference>
<dbReference type="GO" id="GO:0042742">
    <property type="term" value="P:defense response to bacterium"/>
    <property type="evidence" value="ECO:0007669"/>
    <property type="project" value="UniProtKB-KW"/>
</dbReference>
<dbReference type="InterPro" id="IPR012520">
    <property type="entry name" value="Antimicrobial_frog_1"/>
</dbReference>
<dbReference type="Pfam" id="PF08018">
    <property type="entry name" value="Antimicrobial_1"/>
    <property type="match status" value="1"/>
</dbReference>
<reference key="1">
    <citation type="journal article" date="2000" name="Eur. J. Biochem.">
        <title>Peptides with antimicrobial activity from four different families isolated from the skins of the North American frogs Rana luteiventris, Rana berlandieri and Rana pipiens.</title>
        <authorList>
            <person name="Goraya J."/>
            <person name="Wang Y."/>
            <person name="Li Z."/>
            <person name="O'Flaherty M."/>
            <person name="Knoop F.C."/>
            <person name="Platz J.E."/>
            <person name="Conlon J.M."/>
        </authorList>
    </citation>
    <scope>PROTEIN SEQUENCE</scope>
    <scope>FUNCTION</scope>
    <scope>MASS SPECTROMETRY</scope>
    <source>
        <tissue>Skin secretion</tissue>
    </source>
</reference>
<feature type="peptide" id="PRO_0000043528" description="Brevinin-1Bc">
    <location>
        <begin position="1"/>
        <end position="24"/>
    </location>
</feature>
<feature type="disulfide bond" evidence="1">
    <location>
        <begin position="18"/>
        <end position="24"/>
    </location>
</feature>
<organism>
    <name type="scientific">Lithobates berlandieri</name>
    <name type="common">Rio Grande leopard frog</name>
    <name type="synonym">Rana berlandieri</name>
    <dbReference type="NCBI Taxonomy" id="30360"/>
    <lineage>
        <taxon>Eukaryota</taxon>
        <taxon>Metazoa</taxon>
        <taxon>Chordata</taxon>
        <taxon>Craniata</taxon>
        <taxon>Vertebrata</taxon>
        <taxon>Euteleostomi</taxon>
        <taxon>Amphibia</taxon>
        <taxon>Batrachia</taxon>
        <taxon>Anura</taxon>
        <taxon>Neobatrachia</taxon>
        <taxon>Ranoidea</taxon>
        <taxon>Ranidae</taxon>
        <taxon>Lithobates</taxon>
    </lineage>
</organism>
<evidence type="ECO:0000250" key="1"/>
<evidence type="ECO:0000269" key="2">
    <source>
    </source>
</evidence>
<evidence type="ECO:0000305" key="3"/>
<name>BR1C_LITBE</name>
<accession>P82835</accession>
<keyword id="KW-0878">Amphibian defense peptide</keyword>
<keyword id="KW-0044">Antibiotic</keyword>
<keyword id="KW-0929">Antimicrobial</keyword>
<keyword id="KW-0903">Direct protein sequencing</keyword>
<keyword id="KW-1015">Disulfide bond</keyword>
<keyword id="KW-0964">Secreted</keyword>
<proteinExistence type="evidence at protein level"/>
<comment type="function">
    <text evidence="2">Antibacterial activity against Gram-positive bacterium S.aureus.</text>
</comment>
<comment type="subcellular location">
    <subcellularLocation>
        <location>Secreted</location>
    </subcellularLocation>
</comment>
<comment type="tissue specificity">
    <text>Expressed by the skin glands.</text>
</comment>
<comment type="mass spectrometry" mass="2611.3" method="Electrospray" evidence="2"/>
<comment type="similarity">
    <text evidence="3">Belongs to the frog skin active peptide (FSAP) family. Brevinin subfamily.</text>
</comment>